<comment type="function">
    <text evidence="1">Transcriptional regulator (lacking a basic DNA binding domain) which negatively regulates the basic helix-loop-helix (bHLH) transcription factors by forming heterodimers and inhibiting their DNA binding and transcriptional activity. Implicated in regulating a variety of cellular processes, including cellular growth, senescence, differentiation, apoptosis, angiogenesis, and neoplastic transformation (By similarity).</text>
</comment>
<comment type="subunit">
    <text evidence="1">Heterodimer with other HLH proteins.</text>
</comment>
<comment type="subcellular location">
    <subcellularLocation>
        <location evidence="2">Nucleus</location>
    </subcellularLocation>
</comment>
<feature type="chain" id="PRO_0000269177" description="DNA-binding protein inhibitor ID-4">
    <location>
        <begin position="1"/>
        <end position="161"/>
    </location>
</feature>
<feature type="domain" description="bHLH" evidence="2">
    <location>
        <begin position="52"/>
        <end position="104"/>
    </location>
</feature>
<feature type="region of interest" description="Disordered" evidence="3">
    <location>
        <begin position="116"/>
        <end position="161"/>
    </location>
</feature>
<feature type="compositionally biased region" description="Pro residues" evidence="3">
    <location>
        <begin position="117"/>
        <end position="126"/>
    </location>
</feature>
<reference key="1">
    <citation type="submission" date="2006-08" db="EMBL/GenBank/DDBJ databases">
        <authorList>
            <person name="Liu G.Y."/>
        </authorList>
    </citation>
    <scope>NUCLEOTIDE SEQUENCE [LARGE SCALE MRNA]</scope>
</reference>
<keyword id="KW-0539">Nucleus</keyword>
<keyword id="KW-1185">Reference proteome</keyword>
<keyword id="KW-0678">Repressor</keyword>
<keyword id="KW-0804">Transcription</keyword>
<keyword id="KW-0805">Transcription regulation</keyword>
<protein>
    <recommendedName>
        <fullName>DNA-binding protein inhibitor ID-4</fullName>
    </recommendedName>
    <alternativeName>
        <fullName>Inhibitor of DNA binding 4</fullName>
    </alternativeName>
    <alternativeName>
        <fullName>Inhibitor of differentiation 4</fullName>
    </alternativeName>
</protein>
<gene>
    <name type="primary">ID4</name>
</gene>
<dbReference type="EMBL" id="DQ917620">
    <property type="protein sequence ID" value="ABI97165.1"/>
    <property type="molecule type" value="mRNA"/>
</dbReference>
<dbReference type="RefSeq" id="NP_001116602.1">
    <property type="nucleotide sequence ID" value="NM_001123130.1"/>
</dbReference>
<dbReference type="SMR" id="Q06AV5"/>
<dbReference type="FunCoup" id="Q06AV5">
    <property type="interactions" value="259"/>
</dbReference>
<dbReference type="STRING" id="9823.ENSSSCP00000021281"/>
<dbReference type="PaxDb" id="9823-ENSSSCP00000021281"/>
<dbReference type="GeneID" id="100144508"/>
<dbReference type="KEGG" id="ssc:100144508"/>
<dbReference type="CTD" id="3400"/>
<dbReference type="eggNOG" id="ENOG502S1WX">
    <property type="taxonomic scope" value="Eukaryota"/>
</dbReference>
<dbReference type="InParanoid" id="Q06AV5"/>
<dbReference type="OrthoDB" id="10047910at2759"/>
<dbReference type="Proteomes" id="UP000008227">
    <property type="component" value="Unplaced"/>
</dbReference>
<dbReference type="Proteomes" id="UP000314985">
    <property type="component" value="Unplaced"/>
</dbReference>
<dbReference type="Proteomes" id="UP000694570">
    <property type="component" value="Unplaced"/>
</dbReference>
<dbReference type="Proteomes" id="UP000694571">
    <property type="component" value="Unplaced"/>
</dbReference>
<dbReference type="Proteomes" id="UP000694720">
    <property type="component" value="Unplaced"/>
</dbReference>
<dbReference type="Proteomes" id="UP000694722">
    <property type="component" value="Unplaced"/>
</dbReference>
<dbReference type="Proteomes" id="UP000694723">
    <property type="component" value="Unplaced"/>
</dbReference>
<dbReference type="Proteomes" id="UP000694724">
    <property type="component" value="Unplaced"/>
</dbReference>
<dbReference type="Proteomes" id="UP000694725">
    <property type="component" value="Unplaced"/>
</dbReference>
<dbReference type="Proteomes" id="UP000694726">
    <property type="component" value="Unplaced"/>
</dbReference>
<dbReference type="Proteomes" id="UP000694727">
    <property type="component" value="Unplaced"/>
</dbReference>
<dbReference type="Proteomes" id="UP000694728">
    <property type="component" value="Unplaced"/>
</dbReference>
<dbReference type="GO" id="GO:0005737">
    <property type="term" value="C:cytoplasm"/>
    <property type="evidence" value="ECO:0007669"/>
    <property type="project" value="InterPro"/>
</dbReference>
<dbReference type="GO" id="GO:0005634">
    <property type="term" value="C:nucleus"/>
    <property type="evidence" value="ECO:0000318"/>
    <property type="project" value="GO_Central"/>
</dbReference>
<dbReference type="GO" id="GO:0046983">
    <property type="term" value="F:protein dimerization activity"/>
    <property type="evidence" value="ECO:0007669"/>
    <property type="project" value="InterPro"/>
</dbReference>
<dbReference type="GO" id="GO:0003714">
    <property type="term" value="F:transcription corepressor activity"/>
    <property type="evidence" value="ECO:0000318"/>
    <property type="project" value="GO_Central"/>
</dbReference>
<dbReference type="GO" id="GO:0000122">
    <property type="term" value="P:negative regulation of transcription by RNA polymerase II"/>
    <property type="evidence" value="ECO:0000318"/>
    <property type="project" value="GO_Central"/>
</dbReference>
<dbReference type="GO" id="GO:0030182">
    <property type="term" value="P:neuron differentiation"/>
    <property type="evidence" value="ECO:0000318"/>
    <property type="project" value="GO_Central"/>
</dbReference>
<dbReference type="CDD" id="cd19694">
    <property type="entry name" value="bHLH_dnHLH_ID4"/>
    <property type="match status" value="1"/>
</dbReference>
<dbReference type="FunFam" id="4.10.280.10:FF:000048">
    <property type="entry name" value="DNA-binding protein inhibitor ID-4"/>
    <property type="match status" value="1"/>
</dbReference>
<dbReference type="Gene3D" id="4.10.280.10">
    <property type="entry name" value="Helix-loop-helix DNA-binding domain"/>
    <property type="match status" value="1"/>
</dbReference>
<dbReference type="InterPro" id="IPR011598">
    <property type="entry name" value="bHLH_dom"/>
</dbReference>
<dbReference type="InterPro" id="IPR026052">
    <property type="entry name" value="DNA-bd_prot-inh"/>
</dbReference>
<dbReference type="InterPro" id="IPR036638">
    <property type="entry name" value="HLH_DNA-bd_sf"/>
</dbReference>
<dbReference type="PANTHER" id="PTHR11723">
    <property type="entry name" value="DNA-BINDING PROTEIN INHIBITOR"/>
    <property type="match status" value="1"/>
</dbReference>
<dbReference type="PANTHER" id="PTHR11723:SF6">
    <property type="entry name" value="DNA-BINDING PROTEIN INHIBITOR ID-4"/>
    <property type="match status" value="1"/>
</dbReference>
<dbReference type="Pfam" id="PF00010">
    <property type="entry name" value="HLH"/>
    <property type="match status" value="1"/>
</dbReference>
<dbReference type="SMART" id="SM00353">
    <property type="entry name" value="HLH"/>
    <property type="match status" value="1"/>
</dbReference>
<dbReference type="SUPFAM" id="SSF47459">
    <property type="entry name" value="HLH, helix-loop-helix DNA-binding domain"/>
    <property type="match status" value="1"/>
</dbReference>
<dbReference type="PROSITE" id="PS50888">
    <property type="entry name" value="BHLH"/>
    <property type="match status" value="1"/>
</dbReference>
<accession>Q06AV5</accession>
<evidence type="ECO:0000250" key="1"/>
<evidence type="ECO:0000255" key="2">
    <source>
        <dbReference type="PROSITE-ProRule" id="PRU00981"/>
    </source>
</evidence>
<evidence type="ECO:0000256" key="3">
    <source>
        <dbReference type="SAM" id="MobiDB-lite"/>
    </source>
</evidence>
<sequence length="161" mass="16591">MKAVSPVRPSGRKAPSGCGGGELALRCLAEHGHSLGGSAAAAAAAAAARCKAAEAAADEPALCLQCDMNDCYSRLRRLVPTIPPNKKVSKVEILPHVIDYILDLQLALETHPALLRQPPPPAPPHHPAGTCPAAPPRTPLTALNTDPAGAVNKQGDSILCR</sequence>
<name>ID4_PIG</name>
<organism>
    <name type="scientific">Sus scrofa</name>
    <name type="common">Pig</name>
    <dbReference type="NCBI Taxonomy" id="9823"/>
    <lineage>
        <taxon>Eukaryota</taxon>
        <taxon>Metazoa</taxon>
        <taxon>Chordata</taxon>
        <taxon>Craniata</taxon>
        <taxon>Vertebrata</taxon>
        <taxon>Euteleostomi</taxon>
        <taxon>Mammalia</taxon>
        <taxon>Eutheria</taxon>
        <taxon>Laurasiatheria</taxon>
        <taxon>Artiodactyla</taxon>
        <taxon>Suina</taxon>
        <taxon>Suidae</taxon>
        <taxon>Sus</taxon>
    </lineage>
</organism>
<proteinExistence type="evidence at transcript level"/>